<comment type="function">
    <text evidence="1">Catalyzes a trans-dehydration via an enolate intermediate.</text>
</comment>
<comment type="catalytic activity">
    <reaction evidence="1">
        <text>3-dehydroquinate = 3-dehydroshikimate + H2O</text>
        <dbReference type="Rhea" id="RHEA:21096"/>
        <dbReference type="ChEBI" id="CHEBI:15377"/>
        <dbReference type="ChEBI" id="CHEBI:16630"/>
        <dbReference type="ChEBI" id="CHEBI:32364"/>
        <dbReference type="EC" id="4.2.1.10"/>
    </reaction>
</comment>
<comment type="pathway">
    <text evidence="1">Metabolic intermediate biosynthesis; chorismate biosynthesis; chorismate from D-erythrose 4-phosphate and phosphoenolpyruvate: step 3/7.</text>
</comment>
<comment type="subunit">
    <text evidence="1">Homododecamer.</text>
</comment>
<comment type="similarity">
    <text evidence="1">Belongs to the type-II 3-dehydroquinase family.</text>
</comment>
<feature type="chain" id="PRO_1000023484" description="3-dehydroquinate dehydratase">
    <location>
        <begin position="1"/>
        <end position="148"/>
    </location>
</feature>
<feature type="active site" description="Proton acceptor" evidence="1">
    <location>
        <position position="23"/>
    </location>
</feature>
<feature type="active site" description="Proton donor" evidence="1">
    <location>
        <position position="101"/>
    </location>
</feature>
<feature type="binding site" evidence="1">
    <location>
        <position position="75"/>
    </location>
    <ligand>
        <name>substrate</name>
    </ligand>
</feature>
<feature type="binding site" evidence="1">
    <location>
        <position position="81"/>
    </location>
    <ligand>
        <name>substrate</name>
    </ligand>
</feature>
<feature type="binding site" evidence="1">
    <location>
        <position position="88"/>
    </location>
    <ligand>
        <name>substrate</name>
    </ligand>
</feature>
<feature type="binding site" evidence="1">
    <location>
        <begin position="102"/>
        <end position="103"/>
    </location>
    <ligand>
        <name>substrate</name>
    </ligand>
</feature>
<feature type="binding site" evidence="1">
    <location>
        <position position="112"/>
    </location>
    <ligand>
        <name>substrate</name>
    </ligand>
</feature>
<feature type="site" description="Transition state stabilizer" evidence="1">
    <location>
        <position position="18"/>
    </location>
</feature>
<keyword id="KW-0028">Amino-acid biosynthesis</keyword>
<keyword id="KW-0057">Aromatic amino acid biosynthesis</keyword>
<keyword id="KW-0456">Lyase</keyword>
<keyword id="KW-1185">Reference proteome</keyword>
<sequence length="148" mass="16120">MAGILVLNGPNLNLLGVREPGIYGSDTLSDIESRLQAQARVAGMPIDFFQSNAEHALIERIHQAFRDAVDMIIINPGALTHTSVALRDALLATAVPFIEVHISNVHAREPFRRHSYLSDIARGVICGLGPMGYELALQAALQMTHRSL</sequence>
<name>AROQ_METCA</name>
<dbReference type="EC" id="4.2.1.10" evidence="1"/>
<dbReference type="EMBL" id="AE017282">
    <property type="protein sequence ID" value="AAU92849.1"/>
    <property type="molecule type" value="Genomic_DNA"/>
</dbReference>
<dbReference type="RefSeq" id="WP_010960344.1">
    <property type="nucleotide sequence ID" value="NC_002977.6"/>
</dbReference>
<dbReference type="SMR" id="Q60A28"/>
<dbReference type="STRING" id="243233.MCA1044"/>
<dbReference type="GeneID" id="88223337"/>
<dbReference type="KEGG" id="mca:MCA1044"/>
<dbReference type="eggNOG" id="COG0757">
    <property type="taxonomic scope" value="Bacteria"/>
</dbReference>
<dbReference type="HOGENOM" id="CLU_090968_1_0_6"/>
<dbReference type="UniPathway" id="UPA00053">
    <property type="reaction ID" value="UER00086"/>
</dbReference>
<dbReference type="Proteomes" id="UP000006821">
    <property type="component" value="Chromosome"/>
</dbReference>
<dbReference type="GO" id="GO:0003855">
    <property type="term" value="F:3-dehydroquinate dehydratase activity"/>
    <property type="evidence" value="ECO:0007669"/>
    <property type="project" value="UniProtKB-UniRule"/>
</dbReference>
<dbReference type="GO" id="GO:0008652">
    <property type="term" value="P:amino acid biosynthetic process"/>
    <property type="evidence" value="ECO:0007669"/>
    <property type="project" value="UniProtKB-KW"/>
</dbReference>
<dbReference type="GO" id="GO:0009073">
    <property type="term" value="P:aromatic amino acid family biosynthetic process"/>
    <property type="evidence" value="ECO:0007669"/>
    <property type="project" value="UniProtKB-KW"/>
</dbReference>
<dbReference type="GO" id="GO:0009423">
    <property type="term" value="P:chorismate biosynthetic process"/>
    <property type="evidence" value="ECO:0007669"/>
    <property type="project" value="UniProtKB-UniRule"/>
</dbReference>
<dbReference type="GO" id="GO:0019631">
    <property type="term" value="P:quinate catabolic process"/>
    <property type="evidence" value="ECO:0007669"/>
    <property type="project" value="TreeGrafter"/>
</dbReference>
<dbReference type="CDD" id="cd00466">
    <property type="entry name" value="DHQase_II"/>
    <property type="match status" value="1"/>
</dbReference>
<dbReference type="Gene3D" id="3.40.50.9100">
    <property type="entry name" value="Dehydroquinase, class II"/>
    <property type="match status" value="1"/>
</dbReference>
<dbReference type="HAMAP" id="MF_00169">
    <property type="entry name" value="AroQ"/>
    <property type="match status" value="1"/>
</dbReference>
<dbReference type="InterPro" id="IPR001874">
    <property type="entry name" value="DHquinase_II"/>
</dbReference>
<dbReference type="InterPro" id="IPR018509">
    <property type="entry name" value="DHquinase_II_CS"/>
</dbReference>
<dbReference type="InterPro" id="IPR036441">
    <property type="entry name" value="DHquinase_II_sf"/>
</dbReference>
<dbReference type="NCBIfam" id="TIGR01088">
    <property type="entry name" value="aroQ"/>
    <property type="match status" value="1"/>
</dbReference>
<dbReference type="NCBIfam" id="NF003804">
    <property type="entry name" value="PRK05395.1-1"/>
    <property type="match status" value="1"/>
</dbReference>
<dbReference type="NCBIfam" id="NF003805">
    <property type="entry name" value="PRK05395.1-2"/>
    <property type="match status" value="1"/>
</dbReference>
<dbReference type="NCBIfam" id="NF003806">
    <property type="entry name" value="PRK05395.1-3"/>
    <property type="match status" value="1"/>
</dbReference>
<dbReference type="NCBIfam" id="NF003807">
    <property type="entry name" value="PRK05395.1-4"/>
    <property type="match status" value="1"/>
</dbReference>
<dbReference type="PANTHER" id="PTHR21272">
    <property type="entry name" value="CATABOLIC 3-DEHYDROQUINASE"/>
    <property type="match status" value="1"/>
</dbReference>
<dbReference type="PANTHER" id="PTHR21272:SF3">
    <property type="entry name" value="CATABOLIC 3-DEHYDROQUINASE"/>
    <property type="match status" value="1"/>
</dbReference>
<dbReference type="Pfam" id="PF01220">
    <property type="entry name" value="DHquinase_II"/>
    <property type="match status" value="1"/>
</dbReference>
<dbReference type="PIRSF" id="PIRSF001399">
    <property type="entry name" value="DHquinase_II"/>
    <property type="match status" value="1"/>
</dbReference>
<dbReference type="SUPFAM" id="SSF52304">
    <property type="entry name" value="Type II 3-dehydroquinate dehydratase"/>
    <property type="match status" value="1"/>
</dbReference>
<dbReference type="PROSITE" id="PS01029">
    <property type="entry name" value="DEHYDROQUINASE_II"/>
    <property type="match status" value="1"/>
</dbReference>
<protein>
    <recommendedName>
        <fullName evidence="1">3-dehydroquinate dehydratase</fullName>
        <shortName evidence="1">3-dehydroquinase</shortName>
        <ecNumber evidence="1">4.2.1.10</ecNumber>
    </recommendedName>
    <alternativeName>
        <fullName evidence="1">Type II DHQase</fullName>
    </alternativeName>
</protein>
<evidence type="ECO:0000255" key="1">
    <source>
        <dbReference type="HAMAP-Rule" id="MF_00169"/>
    </source>
</evidence>
<accession>Q60A28</accession>
<proteinExistence type="inferred from homology"/>
<reference key="1">
    <citation type="journal article" date="2004" name="PLoS Biol.">
        <title>Genomic insights into methanotrophy: the complete genome sequence of Methylococcus capsulatus (Bath).</title>
        <authorList>
            <person name="Ward N.L."/>
            <person name="Larsen O."/>
            <person name="Sakwa J."/>
            <person name="Bruseth L."/>
            <person name="Khouri H.M."/>
            <person name="Durkin A.S."/>
            <person name="Dimitrov G."/>
            <person name="Jiang L."/>
            <person name="Scanlan D."/>
            <person name="Kang K.H."/>
            <person name="Lewis M.R."/>
            <person name="Nelson K.E."/>
            <person name="Methe B.A."/>
            <person name="Wu M."/>
            <person name="Heidelberg J.F."/>
            <person name="Paulsen I.T."/>
            <person name="Fouts D.E."/>
            <person name="Ravel J."/>
            <person name="Tettelin H."/>
            <person name="Ren Q."/>
            <person name="Read T.D."/>
            <person name="DeBoy R.T."/>
            <person name="Seshadri R."/>
            <person name="Salzberg S.L."/>
            <person name="Jensen H.B."/>
            <person name="Birkeland N.K."/>
            <person name="Nelson W.C."/>
            <person name="Dodson R.J."/>
            <person name="Grindhaug S.H."/>
            <person name="Holt I.E."/>
            <person name="Eidhammer I."/>
            <person name="Jonasen I."/>
            <person name="Vanaken S."/>
            <person name="Utterback T.R."/>
            <person name="Feldblyum T.V."/>
            <person name="Fraser C.M."/>
            <person name="Lillehaug J.R."/>
            <person name="Eisen J.A."/>
        </authorList>
    </citation>
    <scope>NUCLEOTIDE SEQUENCE [LARGE SCALE GENOMIC DNA]</scope>
    <source>
        <strain>ATCC 33009 / NCIMB 11132 / Bath</strain>
    </source>
</reference>
<gene>
    <name evidence="1" type="primary">aroQ</name>
    <name type="ordered locus">MCA1044</name>
</gene>
<organism>
    <name type="scientific">Methylococcus capsulatus (strain ATCC 33009 / NCIMB 11132 / Bath)</name>
    <dbReference type="NCBI Taxonomy" id="243233"/>
    <lineage>
        <taxon>Bacteria</taxon>
        <taxon>Pseudomonadati</taxon>
        <taxon>Pseudomonadota</taxon>
        <taxon>Gammaproteobacteria</taxon>
        <taxon>Methylococcales</taxon>
        <taxon>Methylococcaceae</taxon>
        <taxon>Methylococcus</taxon>
    </lineage>
</organism>